<organism>
    <name type="scientific">Enterococcus faecalis (strain ATCC 700802 / V583)</name>
    <dbReference type="NCBI Taxonomy" id="226185"/>
    <lineage>
        <taxon>Bacteria</taxon>
        <taxon>Bacillati</taxon>
        <taxon>Bacillota</taxon>
        <taxon>Bacilli</taxon>
        <taxon>Lactobacillales</taxon>
        <taxon>Enterococcaceae</taxon>
        <taxon>Enterococcus</taxon>
    </lineage>
</organism>
<dbReference type="EMBL" id="Z19137">
    <property type="protein sequence ID" value="CAA79533.1"/>
    <property type="molecule type" value="Genomic_DNA"/>
</dbReference>
<dbReference type="EMBL" id="AE016830">
    <property type="protein sequence ID" value="AAO80530.1"/>
    <property type="molecule type" value="Genomic_DNA"/>
</dbReference>
<dbReference type="PIR" id="A25053">
    <property type="entry name" value="WQSOHP"/>
</dbReference>
<dbReference type="RefSeq" id="NP_814460.1">
    <property type="nucleotide sequence ID" value="NC_004668.1"/>
</dbReference>
<dbReference type="RefSeq" id="WP_002355551.1">
    <property type="nucleotide sequence ID" value="NZ_KE136527.1"/>
</dbReference>
<dbReference type="PDB" id="1FU0">
    <property type="method" value="X-ray"/>
    <property type="resolution" value="1.90 A"/>
    <property type="chains" value="A/B=1-87"/>
</dbReference>
<dbReference type="PDB" id="1PTF">
    <property type="method" value="X-ray"/>
    <property type="resolution" value="1.60 A"/>
    <property type="chains" value="A=1-88"/>
</dbReference>
<dbReference type="PDB" id="1QFR">
    <property type="method" value="NMR"/>
    <property type="chains" value="A=1-88"/>
</dbReference>
<dbReference type="PDBsum" id="1FU0"/>
<dbReference type="PDBsum" id="1PTF"/>
<dbReference type="PDBsum" id="1QFR"/>
<dbReference type="BMRB" id="P07515"/>
<dbReference type="SMR" id="P07515"/>
<dbReference type="STRING" id="226185.EF_0709"/>
<dbReference type="DrugBank" id="DB04522">
    <property type="generic name" value="Dexfosfoserine"/>
</dbReference>
<dbReference type="EnsemblBacteria" id="AAO80530">
    <property type="protein sequence ID" value="AAO80530"/>
    <property type="gene ID" value="EF_0709"/>
</dbReference>
<dbReference type="KEGG" id="efa:EF0709"/>
<dbReference type="PATRIC" id="fig|226185.45.peg.2651"/>
<dbReference type="eggNOG" id="COG1925">
    <property type="taxonomic scope" value="Bacteria"/>
</dbReference>
<dbReference type="HOGENOM" id="CLU_136230_2_1_9"/>
<dbReference type="EvolutionaryTrace" id="P07515"/>
<dbReference type="Proteomes" id="UP000001415">
    <property type="component" value="Chromosome"/>
</dbReference>
<dbReference type="GO" id="GO:0005737">
    <property type="term" value="C:cytoplasm"/>
    <property type="evidence" value="ECO:0007669"/>
    <property type="project" value="UniProtKB-SubCell"/>
</dbReference>
<dbReference type="GO" id="GO:0009401">
    <property type="term" value="P:phosphoenolpyruvate-dependent sugar phosphotransferase system"/>
    <property type="evidence" value="ECO:0007669"/>
    <property type="project" value="UniProtKB-KW"/>
</dbReference>
<dbReference type="CDD" id="cd00367">
    <property type="entry name" value="PTS-HPr_like"/>
    <property type="match status" value="1"/>
</dbReference>
<dbReference type="Gene3D" id="3.30.1340.10">
    <property type="entry name" value="HPr-like"/>
    <property type="match status" value="1"/>
</dbReference>
<dbReference type="InterPro" id="IPR050399">
    <property type="entry name" value="HPr"/>
</dbReference>
<dbReference type="InterPro" id="IPR000032">
    <property type="entry name" value="HPr-like"/>
</dbReference>
<dbReference type="InterPro" id="IPR035895">
    <property type="entry name" value="HPr-like_sf"/>
</dbReference>
<dbReference type="InterPro" id="IPR001020">
    <property type="entry name" value="PTS_HPr_His_P_site"/>
</dbReference>
<dbReference type="InterPro" id="IPR002114">
    <property type="entry name" value="PTS_HPr_Ser_P_site"/>
</dbReference>
<dbReference type="NCBIfam" id="NF010352">
    <property type="entry name" value="PRK13780.1"/>
    <property type="match status" value="1"/>
</dbReference>
<dbReference type="NCBIfam" id="TIGR01003">
    <property type="entry name" value="PTS_HPr_family"/>
    <property type="match status" value="1"/>
</dbReference>
<dbReference type="PANTHER" id="PTHR33705">
    <property type="entry name" value="PHOSPHOCARRIER PROTEIN HPR"/>
    <property type="match status" value="1"/>
</dbReference>
<dbReference type="PANTHER" id="PTHR33705:SF2">
    <property type="entry name" value="PHOSPHOCARRIER PROTEIN NPR"/>
    <property type="match status" value="1"/>
</dbReference>
<dbReference type="Pfam" id="PF00381">
    <property type="entry name" value="PTS-HPr"/>
    <property type="match status" value="1"/>
</dbReference>
<dbReference type="PRINTS" id="PR00107">
    <property type="entry name" value="PHOSPHOCPHPR"/>
</dbReference>
<dbReference type="SUPFAM" id="SSF55594">
    <property type="entry name" value="HPr-like"/>
    <property type="match status" value="1"/>
</dbReference>
<dbReference type="PROSITE" id="PS51350">
    <property type="entry name" value="PTS_HPR_DOM"/>
    <property type="match status" value="1"/>
</dbReference>
<dbReference type="PROSITE" id="PS00369">
    <property type="entry name" value="PTS_HPR_HIS"/>
    <property type="match status" value="1"/>
</dbReference>
<dbReference type="PROSITE" id="PS00589">
    <property type="entry name" value="PTS_HPR_SER"/>
    <property type="match status" value="1"/>
</dbReference>
<protein>
    <recommendedName>
        <fullName>Phosphocarrier protein HPr</fullName>
    </recommendedName>
    <alternativeName>
        <fullName>Histidine-containing protein</fullName>
    </alternativeName>
</protein>
<sequence length="88" mass="9321">MEKKEFHIVAETGIHARPATLLVQTASKFNSDINLEYKGKSVNLKSIMGVMSLGVGQGSDVTITVDGADEAEGMAAIVETLQKEGLAE</sequence>
<evidence type="ECO:0000250" key="1"/>
<evidence type="ECO:0000255" key="2">
    <source>
        <dbReference type="PROSITE-ProRule" id="PRU00681"/>
    </source>
</evidence>
<evidence type="ECO:0000305" key="3"/>
<evidence type="ECO:0007829" key="4">
    <source>
        <dbReference type="PDB" id="1PTF"/>
    </source>
</evidence>
<reference key="1">
    <citation type="submission" date="1992-12" db="EMBL/GenBank/DDBJ databases">
        <authorList>
            <person name="Reizer J."/>
            <person name="Mitchell W.J."/>
            <person name="Romano A.H."/>
            <person name="Mirkov E.T."/>
            <person name="Saier M.H. Jr."/>
        </authorList>
    </citation>
    <scope>NUCLEOTIDE SEQUENCE [GENOMIC DNA]</scope>
</reference>
<reference key="2">
    <citation type="journal article" date="1986" name="Biochemistry">
        <title>Streptococcal phosphoenolpyruvate-sugar phosphotransferase system: amino acid sequence and site of ATP-dependent phosphorylation of HPr.</title>
        <authorList>
            <person name="Deutscher J."/>
            <person name="Pevec B."/>
            <person name="Beyreuther K."/>
            <person name="Kiltz H.H."/>
            <person name="Hengstenberg W."/>
        </authorList>
    </citation>
    <scope>PROTEIN SEQUENCE</scope>
</reference>
<reference key="3">
    <citation type="journal article" date="2003" name="Science">
        <title>Role of mobile DNA in the evolution of vancomycin-resistant Enterococcus faecalis.</title>
        <authorList>
            <person name="Paulsen I.T."/>
            <person name="Banerjei L."/>
            <person name="Myers G.S.A."/>
            <person name="Nelson K.E."/>
            <person name="Seshadri R."/>
            <person name="Read T.D."/>
            <person name="Fouts D.E."/>
            <person name="Eisen J.A."/>
            <person name="Gill S.R."/>
            <person name="Heidelberg J.F."/>
            <person name="Tettelin H."/>
            <person name="Dodson R.J."/>
            <person name="Umayam L.A."/>
            <person name="Brinkac L.M."/>
            <person name="Beanan M.J."/>
            <person name="Daugherty S.C."/>
            <person name="DeBoy R.T."/>
            <person name="Durkin S.A."/>
            <person name="Kolonay J.F."/>
            <person name="Madupu R."/>
            <person name="Nelson W.C."/>
            <person name="Vamathevan J.J."/>
            <person name="Tran B."/>
            <person name="Upton J."/>
            <person name="Hansen T."/>
            <person name="Shetty J."/>
            <person name="Khouri H.M."/>
            <person name="Utterback T.R."/>
            <person name="Radune D."/>
            <person name="Ketchum K.A."/>
            <person name="Dougherty B.A."/>
            <person name="Fraser C.M."/>
        </authorList>
    </citation>
    <scope>NUCLEOTIDE SEQUENCE [LARGE SCALE GENOMIC DNA]</scope>
    <source>
        <strain>ATCC 700802 / V583</strain>
    </source>
</reference>
<reference key="4">
    <citation type="journal article" date="1993" name="Nature">
        <title>Active-centre torsion-angle strain revealed in 1.6 A-resolution structure of histidine-containing phosphocarrier protein.</title>
        <authorList>
            <person name="Jia Z."/>
            <person name="Vandonselaar M."/>
            <person name="Quail J.W."/>
            <person name="Delbaere L.T.J."/>
        </authorList>
    </citation>
    <scope>X-RAY CRYSTALLOGRAPHY (1.6 ANGSTROMS)</scope>
</reference>
<reference key="5">
    <citation type="journal article" date="2000" name="J. Mol. Biol.">
        <title>The 1.9-A resolution structure of phospho-serine 46 HPr from Enterococcus faecalis.</title>
        <authorList>
            <person name="Audette G.F."/>
            <person name="Engelmann R."/>
            <person name="Hengstenberg W."/>
            <person name="Deutscher J."/>
            <person name="Hayakawa K."/>
            <person name="Quail J.W."/>
            <person name="Delbaere L.T."/>
        </authorList>
    </citation>
    <scope>X-RAY CRYSTALLOGRAPHY (1.9 ANGSTROMS)</scope>
</reference>
<reference key="6">
    <citation type="journal article" date="1998" name="Eur. J. Biochem.">
        <title>Structural studies of histidine-containing phosphocarrier protein from Enterococcus faecalis.</title>
        <authorList>
            <person name="Hahmann M."/>
            <person name="Maurer T."/>
            <person name="Lorenz M."/>
            <person name="Hengstenberg W."/>
            <person name="Glaser S."/>
            <person name="Kalbitzer H.R."/>
        </authorList>
    </citation>
    <scope>STRUCTURE BY NMR</scope>
</reference>
<reference key="7">
    <citation type="journal article" date="2001" name="Eur. J. Biochem.">
        <title>Three-dimensional structure of the histidine-containing phosphocarrier protein (HPr) from Enterococcus faecalis in solution.</title>
        <authorList>
            <person name="Maurer T."/>
            <person name="Doeker R."/>
            <person name="Goerler A."/>
            <person name="Hengstenberg W."/>
            <person name="Kalbitzer H.R."/>
        </authorList>
    </citation>
    <scope>STRUCTURE BY NMR</scope>
</reference>
<feature type="chain" id="PRO_0000107853" description="Phosphocarrier protein HPr">
    <location>
        <begin position="1"/>
        <end position="88"/>
    </location>
</feature>
<feature type="domain" description="HPr" evidence="2">
    <location>
        <begin position="1"/>
        <end position="88"/>
    </location>
</feature>
<feature type="active site" description="Pros-phosphohistidine intermediate" evidence="2">
    <location>
        <position position="15"/>
    </location>
</feature>
<feature type="modified residue" description="Phosphoserine; by HPrK/P" evidence="2">
    <location>
        <position position="46"/>
    </location>
</feature>
<feature type="sequence conflict" description="In Ref. 2; AA sequence." evidence="3" ref="2">
    <original>E</original>
    <variation>EQ</variation>
    <location>
        <position position="88"/>
    </location>
</feature>
<feature type="strand" evidence="4">
    <location>
        <begin position="2"/>
        <end position="7"/>
    </location>
</feature>
<feature type="helix" evidence="4">
    <location>
        <begin position="16"/>
        <end position="26"/>
    </location>
</feature>
<feature type="strand" evidence="4">
    <location>
        <begin position="30"/>
        <end position="37"/>
    </location>
</feature>
<feature type="strand" evidence="4">
    <location>
        <begin position="40"/>
        <end position="43"/>
    </location>
</feature>
<feature type="helix" evidence="4">
    <location>
        <begin position="47"/>
        <end position="53"/>
    </location>
</feature>
<feature type="strand" evidence="4">
    <location>
        <begin position="60"/>
        <end position="67"/>
    </location>
</feature>
<feature type="helix" evidence="4">
    <location>
        <begin position="70"/>
        <end position="83"/>
    </location>
</feature>
<gene>
    <name type="primary">ptsH</name>
    <name type="ordered locus">EF_0709</name>
</gene>
<proteinExistence type="evidence at protein level"/>
<keyword id="KW-0002">3D-structure</keyword>
<keyword id="KW-0963">Cytoplasm</keyword>
<keyword id="KW-0903">Direct protein sequencing</keyword>
<keyword id="KW-0597">Phosphoprotein</keyword>
<keyword id="KW-0598">Phosphotransferase system</keyword>
<keyword id="KW-1185">Reference proteome</keyword>
<keyword id="KW-0762">Sugar transport</keyword>
<keyword id="KW-0804">Transcription</keyword>
<keyword id="KW-0805">Transcription regulation</keyword>
<keyword id="KW-0813">Transport</keyword>
<comment type="function">
    <text>General (non sugar-specific) component of the phosphoenolpyruvate-dependent sugar phosphotransferase system (sugar PTS). This major carbohydrate active-transport system catalyzes the phosphorylation of incoming sugar substrates concomitantly with their translocation across the cell membrane. The phosphoryl group from phosphoenolpyruvate (PEP) is transferred to the phosphoryl carrier protein HPr by enzyme I. Phospho-HPr then transfers it to the PTS EIIA domain.</text>
</comment>
<comment type="function">
    <text evidence="1">P-Ser-HPr interacts with the catabolite control protein A (CcpA), forming a complex that binds to DNA at the catabolite response elements cre, operator sites preceding a large number of catabolite-regulated genes. Thus, P-Ser-HPr is a corepressor in carbon catabolite repression (CCR), a mechanism that allows bacteria to coordinate and optimize the utilization of available carbon sources. P-Ser-HPr also plays a role in inducer exclusion, in which it probably interacts with several non-PTS permeases and inhibits their transport activity (By similarity).</text>
</comment>
<comment type="activity regulation">
    <text>Phosphorylation on Ser-46 inhibits the phosphoryl transfer from enzyme I to HPr.</text>
</comment>
<comment type="subunit">
    <text>Monomer.</text>
</comment>
<comment type="subcellular location">
    <subcellularLocation>
        <location>Cytoplasm</location>
    </subcellularLocation>
</comment>
<comment type="similarity">
    <text evidence="3">Belongs to the HPr family.</text>
</comment>
<accession>P07515</accession>
<name>PTHP_ENTFA</name>